<dbReference type="EC" id="3.1.26.5" evidence="1"/>
<dbReference type="EMBL" id="CU458896">
    <property type="protein sequence ID" value="CAM65022.1"/>
    <property type="molecule type" value="Genomic_DNA"/>
</dbReference>
<dbReference type="RefSeq" id="WP_012296830.1">
    <property type="nucleotide sequence ID" value="NZ_MLCG01000007.1"/>
</dbReference>
<dbReference type="SMR" id="B1MN96"/>
<dbReference type="GeneID" id="93381892"/>
<dbReference type="KEGG" id="mab:MAB_4954c"/>
<dbReference type="Proteomes" id="UP000007137">
    <property type="component" value="Chromosome"/>
</dbReference>
<dbReference type="GO" id="GO:0030677">
    <property type="term" value="C:ribonuclease P complex"/>
    <property type="evidence" value="ECO:0007669"/>
    <property type="project" value="TreeGrafter"/>
</dbReference>
<dbReference type="GO" id="GO:0042781">
    <property type="term" value="F:3'-tRNA processing endoribonuclease activity"/>
    <property type="evidence" value="ECO:0007669"/>
    <property type="project" value="TreeGrafter"/>
</dbReference>
<dbReference type="GO" id="GO:0004526">
    <property type="term" value="F:ribonuclease P activity"/>
    <property type="evidence" value="ECO:0007669"/>
    <property type="project" value="UniProtKB-UniRule"/>
</dbReference>
<dbReference type="GO" id="GO:0000049">
    <property type="term" value="F:tRNA binding"/>
    <property type="evidence" value="ECO:0007669"/>
    <property type="project" value="UniProtKB-UniRule"/>
</dbReference>
<dbReference type="GO" id="GO:0001682">
    <property type="term" value="P:tRNA 5'-leader removal"/>
    <property type="evidence" value="ECO:0007669"/>
    <property type="project" value="UniProtKB-UniRule"/>
</dbReference>
<dbReference type="Gene3D" id="3.30.230.10">
    <property type="match status" value="1"/>
</dbReference>
<dbReference type="HAMAP" id="MF_00227">
    <property type="entry name" value="RNase_P"/>
    <property type="match status" value="1"/>
</dbReference>
<dbReference type="InterPro" id="IPR020568">
    <property type="entry name" value="Ribosomal_Su5_D2-typ_SF"/>
</dbReference>
<dbReference type="InterPro" id="IPR014721">
    <property type="entry name" value="Ribsml_uS5_D2-typ_fold_subgr"/>
</dbReference>
<dbReference type="InterPro" id="IPR000100">
    <property type="entry name" value="RNase_P"/>
</dbReference>
<dbReference type="NCBIfam" id="TIGR00188">
    <property type="entry name" value="rnpA"/>
    <property type="match status" value="1"/>
</dbReference>
<dbReference type="PANTHER" id="PTHR33992">
    <property type="entry name" value="RIBONUCLEASE P PROTEIN COMPONENT"/>
    <property type="match status" value="1"/>
</dbReference>
<dbReference type="PANTHER" id="PTHR33992:SF1">
    <property type="entry name" value="RIBONUCLEASE P PROTEIN COMPONENT"/>
    <property type="match status" value="1"/>
</dbReference>
<dbReference type="Pfam" id="PF00825">
    <property type="entry name" value="Ribonuclease_P"/>
    <property type="match status" value="1"/>
</dbReference>
<dbReference type="SUPFAM" id="SSF54211">
    <property type="entry name" value="Ribosomal protein S5 domain 2-like"/>
    <property type="match status" value="1"/>
</dbReference>
<name>RNPA_MYCA9</name>
<evidence type="ECO:0000255" key="1">
    <source>
        <dbReference type="HAMAP-Rule" id="MF_00227"/>
    </source>
</evidence>
<evidence type="ECO:0000256" key="2">
    <source>
        <dbReference type="SAM" id="MobiDB-lite"/>
    </source>
</evidence>
<sequence length="127" mass="14173">MLPTRHRMTKSSEFRQTVKRGVRTTHADLVIHLRRGCPDSACEQVEGPKVGLIVGKSVGGAVVRHRVSRRLRHAAAELLPKLEPVDRMVIRALPSSSTALSASLRQQLRDGIDRSARRQEPAAERQR</sequence>
<feature type="chain" id="PRO_1000100373" description="Ribonuclease P protein component">
    <location>
        <begin position="1"/>
        <end position="127"/>
    </location>
</feature>
<feature type="region of interest" description="Disordered" evidence="2">
    <location>
        <begin position="99"/>
        <end position="127"/>
    </location>
</feature>
<feature type="compositionally biased region" description="Basic and acidic residues" evidence="2">
    <location>
        <begin position="107"/>
        <end position="127"/>
    </location>
</feature>
<reference key="1">
    <citation type="journal article" date="2009" name="PLoS ONE">
        <title>Non mycobacterial virulence genes in the genome of the emerging pathogen Mycobacterium abscessus.</title>
        <authorList>
            <person name="Ripoll F."/>
            <person name="Pasek S."/>
            <person name="Schenowitz C."/>
            <person name="Dossat C."/>
            <person name="Barbe V."/>
            <person name="Rottman M."/>
            <person name="Macheras E."/>
            <person name="Heym B."/>
            <person name="Herrmann J.L."/>
            <person name="Daffe M."/>
            <person name="Brosch R."/>
            <person name="Risler J.L."/>
            <person name="Gaillard J.L."/>
        </authorList>
    </citation>
    <scope>NUCLEOTIDE SEQUENCE [LARGE SCALE GENOMIC DNA]</scope>
    <source>
        <strain>ATCC 19977 / DSM 44196 / CCUG 20993 / CIP 104536 / JCM 13569 / NCTC 13031 / TMC 1543 / L948</strain>
    </source>
</reference>
<comment type="function">
    <text evidence="1">RNaseP catalyzes the removal of the 5'-leader sequence from pre-tRNA to produce the mature 5'-terminus. It can also cleave other RNA substrates such as 4.5S RNA. The protein component plays an auxiliary but essential role in vivo by binding to the 5'-leader sequence and broadening the substrate specificity of the ribozyme.</text>
</comment>
<comment type="catalytic activity">
    <reaction evidence="1">
        <text>Endonucleolytic cleavage of RNA, removing 5'-extranucleotides from tRNA precursor.</text>
        <dbReference type="EC" id="3.1.26.5"/>
    </reaction>
</comment>
<comment type="subunit">
    <text evidence="1">Consists of a catalytic RNA component (M1 or rnpB) and a protein subunit.</text>
</comment>
<comment type="similarity">
    <text evidence="1">Belongs to the RnpA family.</text>
</comment>
<organism>
    <name type="scientific">Mycobacteroides abscessus (strain ATCC 19977 / DSM 44196 / CCUG 20993 / CIP 104536 / JCM 13569 / NCTC 13031 / TMC 1543 / L948)</name>
    <name type="common">Mycobacterium abscessus</name>
    <dbReference type="NCBI Taxonomy" id="561007"/>
    <lineage>
        <taxon>Bacteria</taxon>
        <taxon>Bacillati</taxon>
        <taxon>Actinomycetota</taxon>
        <taxon>Actinomycetes</taxon>
        <taxon>Mycobacteriales</taxon>
        <taxon>Mycobacteriaceae</taxon>
        <taxon>Mycobacteroides</taxon>
        <taxon>Mycobacteroides abscessus</taxon>
    </lineage>
</organism>
<proteinExistence type="inferred from homology"/>
<gene>
    <name evidence="1" type="primary">rnpA</name>
    <name type="ordered locus">MAB_4954c</name>
</gene>
<accession>B1MN96</accession>
<keyword id="KW-0255">Endonuclease</keyword>
<keyword id="KW-0378">Hydrolase</keyword>
<keyword id="KW-0540">Nuclease</keyword>
<keyword id="KW-1185">Reference proteome</keyword>
<keyword id="KW-0694">RNA-binding</keyword>
<keyword id="KW-0819">tRNA processing</keyword>
<protein>
    <recommendedName>
        <fullName evidence="1">Ribonuclease P protein component</fullName>
        <shortName evidence="1">RNase P protein</shortName>
        <shortName evidence="1">RNaseP protein</shortName>
        <ecNumber evidence="1">3.1.26.5</ecNumber>
    </recommendedName>
    <alternativeName>
        <fullName evidence="1">Protein C5</fullName>
    </alternativeName>
</protein>